<organism>
    <name type="scientific">Schizosaccharomyces pombe (strain 972 / ATCC 24843)</name>
    <name type="common">Fission yeast</name>
    <dbReference type="NCBI Taxonomy" id="284812"/>
    <lineage>
        <taxon>Eukaryota</taxon>
        <taxon>Fungi</taxon>
        <taxon>Dikarya</taxon>
        <taxon>Ascomycota</taxon>
        <taxon>Taphrinomycotina</taxon>
        <taxon>Schizosaccharomycetes</taxon>
        <taxon>Schizosaccharomycetales</taxon>
        <taxon>Schizosaccharomycetaceae</taxon>
        <taxon>Schizosaccharomyces</taxon>
    </lineage>
</organism>
<comment type="function">
    <text evidence="1">Catalyzes the sequential NAD-dependent oxidations of L-histidinol to L-histidinaldehyde and then to L-histidine.</text>
</comment>
<comment type="catalytic activity">
    <reaction>
        <text>L-histidinol + 2 NAD(+) + H2O = L-histidine + 2 NADH + 3 H(+)</text>
        <dbReference type="Rhea" id="RHEA:20641"/>
        <dbReference type="ChEBI" id="CHEBI:15377"/>
        <dbReference type="ChEBI" id="CHEBI:15378"/>
        <dbReference type="ChEBI" id="CHEBI:57540"/>
        <dbReference type="ChEBI" id="CHEBI:57595"/>
        <dbReference type="ChEBI" id="CHEBI:57699"/>
        <dbReference type="ChEBI" id="CHEBI:57945"/>
        <dbReference type="EC" id="1.1.1.23"/>
    </reaction>
</comment>
<comment type="cofactor">
    <cofactor evidence="1">
        <name>Zn(2+)</name>
        <dbReference type="ChEBI" id="CHEBI:29105"/>
    </cofactor>
    <text evidence="1">Binds 1 zinc ion per subunit.</text>
</comment>
<comment type="pathway">
    <text>Amino-acid biosynthesis; L-histidine biosynthesis; L-histidine from 5-phospho-alpha-D-ribose 1-diphosphate: step 9/9.</text>
</comment>
<comment type="similarity">
    <text evidence="2">Belongs to the histidinol dehydrogenase family.</text>
</comment>
<comment type="caution">
    <text evidence="2">In contrast to other fungi who have a single histidine biosynthesis trifunctional protein, 2 proteins are present in S.pombe to ensure these functions: his7 (phosphoribosyl-AMP cyclohydrolase and phosphoribosyl-ATP pyrophosphatase activities) and his2 (histidinol dehydrogenase activity).</text>
</comment>
<protein>
    <recommendedName>
        <fullName>Histidinol dehydrogenase</fullName>
        <shortName>HDH</shortName>
        <ecNumber>1.1.1.23</ecNumber>
    </recommendedName>
</protein>
<name>HISX_SCHPO</name>
<feature type="chain" id="PRO_0000135908" description="Histidinol dehydrogenase">
    <location>
        <begin position="1"/>
        <end position="439"/>
    </location>
</feature>
<feature type="active site" description="Proton acceptor" evidence="1">
    <location>
        <position position="335"/>
    </location>
</feature>
<feature type="active site" description="Proton acceptor" evidence="1">
    <location>
        <position position="336"/>
    </location>
</feature>
<feature type="binding site" evidence="1">
    <location>
        <position position="132"/>
    </location>
    <ligand>
        <name>NAD(+)</name>
        <dbReference type="ChEBI" id="CHEBI:57540"/>
    </ligand>
</feature>
<feature type="binding site" evidence="1">
    <location>
        <position position="194"/>
    </location>
    <ligand>
        <name>NAD(+)</name>
        <dbReference type="ChEBI" id="CHEBI:57540"/>
    </ligand>
</feature>
<feature type="binding site" evidence="1">
    <location>
        <position position="217"/>
    </location>
    <ligand>
        <name>NAD(+)</name>
        <dbReference type="ChEBI" id="CHEBI:57540"/>
    </ligand>
</feature>
<feature type="binding site" evidence="1">
    <location>
        <position position="244"/>
    </location>
    <ligand>
        <name>substrate</name>
    </ligand>
</feature>
<feature type="binding site" evidence="1">
    <location>
        <position position="266"/>
    </location>
    <ligand>
        <name>substrate</name>
    </ligand>
</feature>
<feature type="binding site" evidence="1">
    <location>
        <position position="266"/>
    </location>
    <ligand>
        <name>Zn(2+)</name>
        <dbReference type="ChEBI" id="CHEBI:29105"/>
    </ligand>
</feature>
<feature type="binding site" evidence="1">
    <location>
        <position position="269"/>
    </location>
    <ligand>
        <name>substrate</name>
    </ligand>
</feature>
<feature type="binding site" evidence="1">
    <location>
        <position position="269"/>
    </location>
    <ligand>
        <name>Zn(2+)</name>
        <dbReference type="ChEBI" id="CHEBI:29105"/>
    </ligand>
</feature>
<feature type="binding site" evidence="1">
    <location>
        <position position="336"/>
    </location>
    <ligand>
        <name>substrate</name>
    </ligand>
</feature>
<feature type="binding site" evidence="1">
    <location>
        <position position="369"/>
    </location>
    <ligand>
        <name>substrate</name>
    </ligand>
</feature>
<feature type="binding site" evidence="1">
    <location>
        <position position="369"/>
    </location>
    <ligand>
        <name>Zn(2+)</name>
        <dbReference type="ChEBI" id="CHEBI:29105"/>
    </ligand>
</feature>
<feature type="binding site" evidence="1">
    <location>
        <position position="423"/>
    </location>
    <ligand>
        <name>substrate</name>
    </ligand>
</feature>
<feature type="binding site" evidence="1">
    <location>
        <position position="428"/>
    </location>
    <ligand>
        <name>substrate</name>
    </ligand>
</feature>
<feature type="binding site" evidence="1">
    <location>
        <position position="428"/>
    </location>
    <ligand>
        <name>Zn(2+)</name>
        <dbReference type="ChEBI" id="CHEBI:29105"/>
    </ligand>
</feature>
<evidence type="ECO:0000250" key="1"/>
<evidence type="ECO:0000305" key="2"/>
<dbReference type="EC" id="1.1.1.23"/>
<dbReference type="EMBL" id="CU329671">
    <property type="protein sequence ID" value="CAB88243.1"/>
    <property type="molecule type" value="Genomic_DNA"/>
</dbReference>
<dbReference type="RefSeq" id="NP_595886.1">
    <property type="nucleotide sequence ID" value="NM_001021792.2"/>
</dbReference>
<dbReference type="SMR" id="Q9P777"/>
<dbReference type="BioGRID" id="276205">
    <property type="interactions" value="9"/>
</dbReference>
<dbReference type="DIP" id="DIP-59120N"/>
<dbReference type="FunCoup" id="Q9P777">
    <property type="interactions" value="534"/>
</dbReference>
<dbReference type="IntAct" id="Q9P777">
    <property type="interactions" value="1"/>
</dbReference>
<dbReference type="STRING" id="284812.Q9P777"/>
<dbReference type="iPTMnet" id="Q9P777"/>
<dbReference type="PaxDb" id="4896-SPBC1711.13.1"/>
<dbReference type="EnsemblFungi" id="SPBC1711.13.1">
    <property type="protein sequence ID" value="SPBC1711.13.1:pep"/>
    <property type="gene ID" value="SPBC1711.13"/>
</dbReference>
<dbReference type="GeneID" id="2539650"/>
<dbReference type="KEGG" id="spo:2539650"/>
<dbReference type="PomBase" id="SPBC1711.13">
    <property type="gene designation" value="his2"/>
</dbReference>
<dbReference type="VEuPathDB" id="FungiDB:SPBC1711.13"/>
<dbReference type="eggNOG" id="KOG2697">
    <property type="taxonomic scope" value="Eukaryota"/>
</dbReference>
<dbReference type="HOGENOM" id="CLU_006732_3_0_1"/>
<dbReference type="InParanoid" id="Q9P777"/>
<dbReference type="OMA" id="YIAGPNH"/>
<dbReference type="PhylomeDB" id="Q9P777"/>
<dbReference type="UniPathway" id="UPA00031">
    <property type="reaction ID" value="UER00014"/>
</dbReference>
<dbReference type="PRO" id="PR:Q9P777"/>
<dbReference type="Proteomes" id="UP000002485">
    <property type="component" value="Chromosome II"/>
</dbReference>
<dbReference type="GO" id="GO:0005737">
    <property type="term" value="C:cytoplasm"/>
    <property type="evidence" value="ECO:0000318"/>
    <property type="project" value="GO_Central"/>
</dbReference>
<dbReference type="GO" id="GO:0005829">
    <property type="term" value="C:cytosol"/>
    <property type="evidence" value="ECO:0007005"/>
    <property type="project" value="PomBase"/>
</dbReference>
<dbReference type="GO" id="GO:0005634">
    <property type="term" value="C:nucleus"/>
    <property type="evidence" value="ECO:0007005"/>
    <property type="project" value="PomBase"/>
</dbReference>
<dbReference type="GO" id="GO:0004399">
    <property type="term" value="F:histidinol dehydrogenase activity"/>
    <property type="evidence" value="ECO:0000315"/>
    <property type="project" value="PomBase"/>
</dbReference>
<dbReference type="GO" id="GO:0046872">
    <property type="term" value="F:metal ion binding"/>
    <property type="evidence" value="ECO:0007669"/>
    <property type="project" value="UniProtKB-KW"/>
</dbReference>
<dbReference type="GO" id="GO:0051287">
    <property type="term" value="F:NAD binding"/>
    <property type="evidence" value="ECO:0007669"/>
    <property type="project" value="InterPro"/>
</dbReference>
<dbReference type="GO" id="GO:0000105">
    <property type="term" value="P:L-histidine biosynthetic process"/>
    <property type="evidence" value="ECO:0000315"/>
    <property type="project" value="PomBase"/>
</dbReference>
<dbReference type="CDD" id="cd06572">
    <property type="entry name" value="Histidinol_dh"/>
    <property type="match status" value="1"/>
</dbReference>
<dbReference type="FunFam" id="3.40.50.1980:FF:000050">
    <property type="entry name" value="Histidine biosynthesis trifunctional protein"/>
    <property type="match status" value="1"/>
</dbReference>
<dbReference type="FunFam" id="3.40.50.1980:FF:000001">
    <property type="entry name" value="Histidinol dehydrogenase"/>
    <property type="match status" value="1"/>
</dbReference>
<dbReference type="FunFam" id="1.20.5.1300:FF:000002">
    <property type="entry name" value="Histidinol dehydrogenase, chloroplastic"/>
    <property type="match status" value="1"/>
</dbReference>
<dbReference type="Gene3D" id="1.20.5.1300">
    <property type="match status" value="1"/>
</dbReference>
<dbReference type="Gene3D" id="3.40.50.1980">
    <property type="entry name" value="Nitrogenase molybdenum iron protein domain"/>
    <property type="match status" value="2"/>
</dbReference>
<dbReference type="HAMAP" id="MF_01024">
    <property type="entry name" value="HisD"/>
    <property type="match status" value="1"/>
</dbReference>
<dbReference type="InterPro" id="IPR016161">
    <property type="entry name" value="Ald_DH/histidinol_DH"/>
</dbReference>
<dbReference type="InterPro" id="IPR001692">
    <property type="entry name" value="Histidinol_DH_CS"/>
</dbReference>
<dbReference type="InterPro" id="IPR022695">
    <property type="entry name" value="Histidinol_DH_monofunct"/>
</dbReference>
<dbReference type="InterPro" id="IPR012131">
    <property type="entry name" value="Hstdl_DH"/>
</dbReference>
<dbReference type="NCBIfam" id="TIGR00069">
    <property type="entry name" value="hisD"/>
    <property type="match status" value="1"/>
</dbReference>
<dbReference type="PANTHER" id="PTHR21256:SF2">
    <property type="entry name" value="HISTIDINE BIOSYNTHESIS TRIFUNCTIONAL PROTEIN"/>
    <property type="match status" value="1"/>
</dbReference>
<dbReference type="PANTHER" id="PTHR21256">
    <property type="entry name" value="HISTIDINOL DEHYDROGENASE HDH"/>
    <property type="match status" value="1"/>
</dbReference>
<dbReference type="Pfam" id="PF00815">
    <property type="entry name" value="Histidinol_dh"/>
    <property type="match status" value="1"/>
</dbReference>
<dbReference type="PIRSF" id="PIRSF000099">
    <property type="entry name" value="Histidinol_dh"/>
    <property type="match status" value="1"/>
</dbReference>
<dbReference type="PRINTS" id="PR00083">
    <property type="entry name" value="HOLDHDRGNASE"/>
</dbReference>
<dbReference type="SUPFAM" id="SSF53720">
    <property type="entry name" value="ALDH-like"/>
    <property type="match status" value="1"/>
</dbReference>
<dbReference type="PROSITE" id="PS00611">
    <property type="entry name" value="HISOL_DEHYDROGENASE"/>
    <property type="match status" value="1"/>
</dbReference>
<proteinExistence type="inferred from homology"/>
<gene>
    <name type="primary">his2</name>
    <name type="ORF">SPBC1711.13</name>
</gene>
<reference key="1">
    <citation type="journal article" date="2002" name="Nature">
        <title>The genome sequence of Schizosaccharomyces pombe.</title>
        <authorList>
            <person name="Wood V."/>
            <person name="Gwilliam R."/>
            <person name="Rajandream M.A."/>
            <person name="Lyne M.H."/>
            <person name="Lyne R."/>
            <person name="Stewart A."/>
            <person name="Sgouros J.G."/>
            <person name="Peat N."/>
            <person name="Hayles J."/>
            <person name="Baker S.G."/>
            <person name="Basham D."/>
            <person name="Bowman S."/>
            <person name="Brooks K."/>
            <person name="Brown D."/>
            <person name="Brown S."/>
            <person name="Chillingworth T."/>
            <person name="Churcher C.M."/>
            <person name="Collins M."/>
            <person name="Connor R."/>
            <person name="Cronin A."/>
            <person name="Davis P."/>
            <person name="Feltwell T."/>
            <person name="Fraser A."/>
            <person name="Gentles S."/>
            <person name="Goble A."/>
            <person name="Hamlin N."/>
            <person name="Harris D.E."/>
            <person name="Hidalgo J."/>
            <person name="Hodgson G."/>
            <person name="Holroyd S."/>
            <person name="Hornsby T."/>
            <person name="Howarth S."/>
            <person name="Huckle E.J."/>
            <person name="Hunt S."/>
            <person name="Jagels K."/>
            <person name="James K.D."/>
            <person name="Jones L."/>
            <person name="Jones M."/>
            <person name="Leather S."/>
            <person name="McDonald S."/>
            <person name="McLean J."/>
            <person name="Mooney P."/>
            <person name="Moule S."/>
            <person name="Mungall K.L."/>
            <person name="Murphy L.D."/>
            <person name="Niblett D."/>
            <person name="Odell C."/>
            <person name="Oliver K."/>
            <person name="O'Neil S."/>
            <person name="Pearson D."/>
            <person name="Quail M.A."/>
            <person name="Rabbinowitsch E."/>
            <person name="Rutherford K.M."/>
            <person name="Rutter S."/>
            <person name="Saunders D."/>
            <person name="Seeger K."/>
            <person name="Sharp S."/>
            <person name="Skelton J."/>
            <person name="Simmonds M.N."/>
            <person name="Squares R."/>
            <person name="Squares S."/>
            <person name="Stevens K."/>
            <person name="Taylor K."/>
            <person name="Taylor R.G."/>
            <person name="Tivey A."/>
            <person name="Walsh S.V."/>
            <person name="Warren T."/>
            <person name="Whitehead S."/>
            <person name="Woodward J.R."/>
            <person name="Volckaert G."/>
            <person name="Aert R."/>
            <person name="Robben J."/>
            <person name="Grymonprez B."/>
            <person name="Weltjens I."/>
            <person name="Vanstreels E."/>
            <person name="Rieger M."/>
            <person name="Schaefer M."/>
            <person name="Mueller-Auer S."/>
            <person name="Gabel C."/>
            <person name="Fuchs M."/>
            <person name="Duesterhoeft A."/>
            <person name="Fritzc C."/>
            <person name="Holzer E."/>
            <person name="Moestl D."/>
            <person name="Hilbert H."/>
            <person name="Borzym K."/>
            <person name="Langer I."/>
            <person name="Beck A."/>
            <person name="Lehrach H."/>
            <person name="Reinhardt R."/>
            <person name="Pohl T.M."/>
            <person name="Eger P."/>
            <person name="Zimmermann W."/>
            <person name="Wedler H."/>
            <person name="Wambutt R."/>
            <person name="Purnelle B."/>
            <person name="Goffeau A."/>
            <person name="Cadieu E."/>
            <person name="Dreano S."/>
            <person name="Gloux S."/>
            <person name="Lelaure V."/>
            <person name="Mottier S."/>
            <person name="Galibert F."/>
            <person name="Aves S.J."/>
            <person name="Xiang Z."/>
            <person name="Hunt C."/>
            <person name="Moore K."/>
            <person name="Hurst S.M."/>
            <person name="Lucas M."/>
            <person name="Rochet M."/>
            <person name="Gaillardin C."/>
            <person name="Tallada V.A."/>
            <person name="Garzon A."/>
            <person name="Thode G."/>
            <person name="Daga R.R."/>
            <person name="Cruzado L."/>
            <person name="Jimenez J."/>
            <person name="Sanchez M."/>
            <person name="del Rey F."/>
            <person name="Benito J."/>
            <person name="Dominguez A."/>
            <person name="Revuelta J.L."/>
            <person name="Moreno S."/>
            <person name="Armstrong J."/>
            <person name="Forsburg S.L."/>
            <person name="Cerutti L."/>
            <person name="Lowe T."/>
            <person name="McCombie W.R."/>
            <person name="Paulsen I."/>
            <person name="Potashkin J."/>
            <person name="Shpakovski G.V."/>
            <person name="Ussery D."/>
            <person name="Barrell B.G."/>
            <person name="Nurse P."/>
        </authorList>
    </citation>
    <scope>NUCLEOTIDE SEQUENCE [LARGE SCALE GENOMIC DNA]</scope>
    <source>
        <strain>972 / ATCC 24843</strain>
    </source>
</reference>
<accession>Q9P777</accession>
<keyword id="KW-0028">Amino-acid biosynthesis</keyword>
<keyword id="KW-0368">Histidine biosynthesis</keyword>
<keyword id="KW-0479">Metal-binding</keyword>
<keyword id="KW-0520">NAD</keyword>
<keyword id="KW-0560">Oxidoreductase</keyword>
<keyword id="KW-1185">Reference proteome</keyword>
<keyword id="KW-0862">Zinc</keyword>
<sequence length="439" mass="47554">MPEYEIQVPSYRAAALTAEERTRLLARPIQNTQKIRTIVQPIIEDVKSRGEASLIDYASKFEKVQLKSAVLKAPFDDDLMKISPMIKEDIDIAFNNIFAFHSSQLRPTIAVQTMRGVVCQRMSRPINRVGLYIPGGTAVLPSTALMLGVPAKVAGCPHVVISTPVRKDGTVAPEIVYIANKIGAEAIILAGGAQAIAAMAYGISGVPKVNKIFGPGNQFVTAAKMHVQNDYGALVAIDLPAGPSEVLVIADETCNPESVALDLLSQAEHGLDSQIILLTVSLSPEMFDRIQKAINDHALRLSRSYIIKHAIKKSVIVQVDNVDQAFEWSNLYGPEHLVLHLKNASSYIPKIDNAGSVFVGPWSPVSMGDYASGTNHTLPTYGYASSYSGVSTDSFLKYITTQELTEEGIQRLGPTVIRLAELEGLTAHADAVRVRGVRL</sequence>